<accession>Q8CHX6</accession>
<accession>A2AC85</accession>
<keyword id="KW-0153">Cholesterol metabolism</keyword>
<keyword id="KW-0963">Cytoplasm</keyword>
<keyword id="KW-0325">Glycoprotein</keyword>
<keyword id="KW-0333">Golgi apparatus</keyword>
<keyword id="KW-0378">Hydrolase</keyword>
<keyword id="KW-0443">Lipid metabolism</keyword>
<keyword id="KW-0472">Membrane</keyword>
<keyword id="KW-0479">Metal-binding</keyword>
<keyword id="KW-0482">Metalloprotease</keyword>
<keyword id="KW-0645">Protease</keyword>
<keyword id="KW-1185">Reference proteome</keyword>
<keyword id="KW-0753">Steroid metabolism</keyword>
<keyword id="KW-1207">Sterol metabolism</keyword>
<keyword id="KW-0812">Transmembrane</keyword>
<keyword id="KW-1133">Transmembrane helix</keyword>
<keyword id="KW-0862">Zinc</keyword>
<evidence type="ECO:0000250" key="1">
    <source>
        <dbReference type="UniProtKB" id="O43462"/>
    </source>
</evidence>
<evidence type="ECO:0000255" key="2"/>
<evidence type="ECO:0000255" key="3">
    <source>
        <dbReference type="PROSITE-ProRule" id="PRU10095"/>
    </source>
</evidence>
<evidence type="ECO:0000305" key="4"/>
<reference key="1">
    <citation type="journal article" date="2005" name="Science">
        <title>The transcriptional landscape of the mammalian genome.</title>
        <authorList>
            <person name="Carninci P."/>
            <person name="Kasukawa T."/>
            <person name="Katayama S."/>
            <person name="Gough J."/>
            <person name="Frith M.C."/>
            <person name="Maeda N."/>
            <person name="Oyama R."/>
            <person name="Ravasi T."/>
            <person name="Lenhard B."/>
            <person name="Wells C."/>
            <person name="Kodzius R."/>
            <person name="Shimokawa K."/>
            <person name="Bajic V.B."/>
            <person name="Brenner S.E."/>
            <person name="Batalov S."/>
            <person name="Forrest A.R."/>
            <person name="Zavolan M."/>
            <person name="Davis M.J."/>
            <person name="Wilming L.G."/>
            <person name="Aidinis V."/>
            <person name="Allen J.E."/>
            <person name="Ambesi-Impiombato A."/>
            <person name="Apweiler R."/>
            <person name="Aturaliya R.N."/>
            <person name="Bailey T.L."/>
            <person name="Bansal M."/>
            <person name="Baxter L."/>
            <person name="Beisel K.W."/>
            <person name="Bersano T."/>
            <person name="Bono H."/>
            <person name="Chalk A.M."/>
            <person name="Chiu K.P."/>
            <person name="Choudhary V."/>
            <person name="Christoffels A."/>
            <person name="Clutterbuck D.R."/>
            <person name="Crowe M.L."/>
            <person name="Dalla E."/>
            <person name="Dalrymple B.P."/>
            <person name="de Bono B."/>
            <person name="Della Gatta G."/>
            <person name="di Bernardo D."/>
            <person name="Down T."/>
            <person name="Engstrom P."/>
            <person name="Fagiolini M."/>
            <person name="Faulkner G."/>
            <person name="Fletcher C.F."/>
            <person name="Fukushima T."/>
            <person name="Furuno M."/>
            <person name="Futaki S."/>
            <person name="Gariboldi M."/>
            <person name="Georgii-Hemming P."/>
            <person name="Gingeras T.R."/>
            <person name="Gojobori T."/>
            <person name="Green R.E."/>
            <person name="Gustincich S."/>
            <person name="Harbers M."/>
            <person name="Hayashi Y."/>
            <person name="Hensch T.K."/>
            <person name="Hirokawa N."/>
            <person name="Hill D."/>
            <person name="Huminiecki L."/>
            <person name="Iacono M."/>
            <person name="Ikeo K."/>
            <person name="Iwama A."/>
            <person name="Ishikawa T."/>
            <person name="Jakt M."/>
            <person name="Kanapin A."/>
            <person name="Katoh M."/>
            <person name="Kawasawa Y."/>
            <person name="Kelso J."/>
            <person name="Kitamura H."/>
            <person name="Kitano H."/>
            <person name="Kollias G."/>
            <person name="Krishnan S.P."/>
            <person name="Kruger A."/>
            <person name="Kummerfeld S.K."/>
            <person name="Kurochkin I.V."/>
            <person name="Lareau L.F."/>
            <person name="Lazarevic D."/>
            <person name="Lipovich L."/>
            <person name="Liu J."/>
            <person name="Liuni S."/>
            <person name="McWilliam S."/>
            <person name="Madan Babu M."/>
            <person name="Madera M."/>
            <person name="Marchionni L."/>
            <person name="Matsuda H."/>
            <person name="Matsuzawa S."/>
            <person name="Miki H."/>
            <person name="Mignone F."/>
            <person name="Miyake S."/>
            <person name="Morris K."/>
            <person name="Mottagui-Tabar S."/>
            <person name="Mulder N."/>
            <person name="Nakano N."/>
            <person name="Nakauchi H."/>
            <person name="Ng P."/>
            <person name="Nilsson R."/>
            <person name="Nishiguchi S."/>
            <person name="Nishikawa S."/>
            <person name="Nori F."/>
            <person name="Ohara O."/>
            <person name="Okazaki Y."/>
            <person name="Orlando V."/>
            <person name="Pang K.C."/>
            <person name="Pavan W.J."/>
            <person name="Pavesi G."/>
            <person name="Pesole G."/>
            <person name="Petrovsky N."/>
            <person name="Piazza S."/>
            <person name="Reed J."/>
            <person name="Reid J.F."/>
            <person name="Ring B.Z."/>
            <person name="Ringwald M."/>
            <person name="Rost B."/>
            <person name="Ruan Y."/>
            <person name="Salzberg S.L."/>
            <person name="Sandelin A."/>
            <person name="Schneider C."/>
            <person name="Schoenbach C."/>
            <person name="Sekiguchi K."/>
            <person name="Semple C.A."/>
            <person name="Seno S."/>
            <person name="Sessa L."/>
            <person name="Sheng Y."/>
            <person name="Shibata Y."/>
            <person name="Shimada H."/>
            <person name="Shimada K."/>
            <person name="Silva D."/>
            <person name="Sinclair B."/>
            <person name="Sperling S."/>
            <person name="Stupka E."/>
            <person name="Sugiura K."/>
            <person name="Sultana R."/>
            <person name="Takenaka Y."/>
            <person name="Taki K."/>
            <person name="Tammoja K."/>
            <person name="Tan S.L."/>
            <person name="Tang S."/>
            <person name="Taylor M.S."/>
            <person name="Tegner J."/>
            <person name="Teichmann S.A."/>
            <person name="Ueda H.R."/>
            <person name="van Nimwegen E."/>
            <person name="Verardo R."/>
            <person name="Wei C.L."/>
            <person name="Yagi K."/>
            <person name="Yamanishi H."/>
            <person name="Zabarovsky E."/>
            <person name="Zhu S."/>
            <person name="Zimmer A."/>
            <person name="Hide W."/>
            <person name="Bult C."/>
            <person name="Grimmond S.M."/>
            <person name="Teasdale R.D."/>
            <person name="Liu E.T."/>
            <person name="Brusic V."/>
            <person name="Quackenbush J."/>
            <person name="Wahlestedt C."/>
            <person name="Mattick J.S."/>
            <person name="Hume D.A."/>
            <person name="Kai C."/>
            <person name="Sasaki D."/>
            <person name="Tomaru Y."/>
            <person name="Fukuda S."/>
            <person name="Kanamori-Katayama M."/>
            <person name="Suzuki M."/>
            <person name="Aoki J."/>
            <person name="Arakawa T."/>
            <person name="Iida J."/>
            <person name="Imamura K."/>
            <person name="Itoh M."/>
            <person name="Kato T."/>
            <person name="Kawaji H."/>
            <person name="Kawagashira N."/>
            <person name="Kawashima T."/>
            <person name="Kojima M."/>
            <person name="Kondo S."/>
            <person name="Konno H."/>
            <person name="Nakano K."/>
            <person name="Ninomiya N."/>
            <person name="Nishio T."/>
            <person name="Okada M."/>
            <person name="Plessy C."/>
            <person name="Shibata K."/>
            <person name="Shiraki T."/>
            <person name="Suzuki S."/>
            <person name="Tagami M."/>
            <person name="Waki K."/>
            <person name="Watahiki A."/>
            <person name="Okamura-Oho Y."/>
            <person name="Suzuki H."/>
            <person name="Kawai J."/>
            <person name="Hayashizaki Y."/>
        </authorList>
    </citation>
    <scope>NUCLEOTIDE SEQUENCE [LARGE SCALE MRNA]</scope>
    <source>
        <strain>C57BL/6J</strain>
        <tissue>Heart</tissue>
    </source>
</reference>
<reference key="2">
    <citation type="journal article" date="2009" name="PLoS Biol.">
        <title>Lineage-specific biology revealed by a finished genome assembly of the mouse.</title>
        <authorList>
            <person name="Church D.M."/>
            <person name="Goodstadt L."/>
            <person name="Hillier L.W."/>
            <person name="Zody M.C."/>
            <person name="Goldstein S."/>
            <person name="She X."/>
            <person name="Bult C.J."/>
            <person name="Agarwala R."/>
            <person name="Cherry J.L."/>
            <person name="DiCuccio M."/>
            <person name="Hlavina W."/>
            <person name="Kapustin Y."/>
            <person name="Meric P."/>
            <person name="Maglott D."/>
            <person name="Birtle Z."/>
            <person name="Marques A.C."/>
            <person name="Graves T."/>
            <person name="Zhou S."/>
            <person name="Teague B."/>
            <person name="Potamousis K."/>
            <person name="Churas C."/>
            <person name="Place M."/>
            <person name="Herschleb J."/>
            <person name="Runnheim R."/>
            <person name="Forrest D."/>
            <person name="Amos-Landgraf J."/>
            <person name="Schwartz D.C."/>
            <person name="Cheng Z."/>
            <person name="Lindblad-Toh K."/>
            <person name="Eichler E.E."/>
            <person name="Ponting C.P."/>
        </authorList>
    </citation>
    <scope>NUCLEOTIDE SEQUENCE [LARGE SCALE GENOMIC DNA]</scope>
    <source>
        <strain>C57BL/6J</strain>
    </source>
</reference>
<reference key="3">
    <citation type="journal article" date="2004" name="Genome Res.">
        <title>The status, quality, and expansion of the NIH full-length cDNA project: the Mammalian Gene Collection (MGC).</title>
        <authorList>
            <consortium name="The MGC Project Team"/>
        </authorList>
    </citation>
    <scope>NUCLEOTIDE SEQUENCE [LARGE SCALE MRNA]</scope>
    <source>
        <strain>FVB/N</strain>
        <tissue>Mammary tumor</tissue>
    </source>
</reference>
<name>MBTP2_MOUSE</name>
<sequence length="515" mass="56960">MIPVSLLVVVVGGWTAVYLADLVLKSSVYFKHSYEDWLENNGLSISPFHIRWQTSIFNRAFYSWGRRKARMLYQWFNFGMVFGVIAMFSSFFLLGKTLMQTLAQMMADSPSPYSSSSSSSSSSSSSSSSSSSLHNEQVLQVVVPGINLPVNQLTYFFAAVLISGVVHEIGHGIAAIREQVRFNGFGIFLFIIYPGAFVDLFTTHLQLISPVQQLRIFCAGIWHNFVLALLGILALVLLPVILLPFYYTGVGVLITEVAEDSPAIGPRGLFVGDLVTHLQDCPVTNVQDWNECLDTIAYEPQIGYCISASTLQQLSFPVRAYKRLDGSTECCNNHSLTDVCFSYRNNFNKRLHTCLPARKAVEATQVCRSNKDCKSGASSSFCIVPSLETHTRLIKVKHPPQIDMLYVGHPLHLHYTVSITSFIPRFNFLSIDLPVIVETFVKYLISLSGALAIVNAVPCFALDGQWILNSFLDATLTSVIGDNDVKDLIGFFILLGGSVLLAANVTLGLWMVTAR</sequence>
<feature type="chain" id="PRO_0000261592" description="Membrane-bound transcription factor site-2 protease">
    <location>
        <begin position="1"/>
        <end position="515"/>
    </location>
</feature>
<feature type="topological domain" description="Cytoplasmic" evidence="1">
    <location>
        <begin position="1"/>
        <end position="3"/>
    </location>
</feature>
<feature type="transmembrane region" description="Helical" evidence="2">
    <location>
        <begin position="4"/>
        <end position="24"/>
    </location>
</feature>
<feature type="topological domain" description="Lumenal" evidence="1">
    <location>
        <begin position="25"/>
        <end position="74"/>
    </location>
</feature>
<feature type="transmembrane region" description="Helical" evidence="2">
    <location>
        <begin position="75"/>
        <end position="95"/>
    </location>
</feature>
<feature type="transmembrane region" description="Helical" evidence="2">
    <location>
        <begin position="96"/>
        <end position="107"/>
    </location>
</feature>
<feature type="topological domain" description="Lumenal" evidence="1">
    <location>
        <begin position="108"/>
        <end position="140"/>
    </location>
</feature>
<feature type="transmembrane region" description="Helical" evidence="2">
    <location>
        <begin position="141"/>
        <end position="165"/>
    </location>
</feature>
<feature type="transmembrane region" description="Helical" evidence="2">
    <location>
        <begin position="170"/>
        <end position="182"/>
    </location>
</feature>
<feature type="transmembrane region" description="Helical" evidence="2">
    <location>
        <begin position="183"/>
        <end position="205"/>
    </location>
</feature>
<feature type="transmembrane region" description="Helical" evidence="2">
    <location>
        <begin position="225"/>
        <end position="247"/>
    </location>
</feature>
<feature type="topological domain" description="Lumenal" evidence="1">
    <location>
        <begin position="248"/>
        <end position="442"/>
    </location>
</feature>
<feature type="transmembrane region" description="Helical" evidence="2">
    <location>
        <begin position="443"/>
        <end position="460"/>
    </location>
</feature>
<feature type="transmembrane region" description="Helical" evidence="2">
    <location>
        <begin position="461"/>
        <end position="472"/>
    </location>
</feature>
<feature type="topological domain" description="Lumenal" evidence="2">
    <location>
        <begin position="473"/>
        <end position="488"/>
    </location>
</feature>
<feature type="transmembrane region" description="Helical" evidence="2">
    <location>
        <begin position="489"/>
        <end position="509"/>
    </location>
</feature>
<feature type="topological domain" description="Cytoplasmic" evidence="2">
    <location>
        <begin position="510"/>
        <end position="515"/>
    </location>
</feature>
<feature type="active site" evidence="3">
    <location>
        <position position="168"/>
    </location>
</feature>
<feature type="binding site" evidence="3">
    <location>
        <position position="167"/>
    </location>
    <ligand>
        <name>Zn(2+)</name>
        <dbReference type="ChEBI" id="CHEBI:29105"/>
        <note>catalytic</note>
    </ligand>
</feature>
<feature type="binding site" evidence="3">
    <location>
        <position position="171"/>
    </location>
    <ligand>
        <name>Zn(2+)</name>
        <dbReference type="ChEBI" id="CHEBI:29105"/>
        <note>catalytic</note>
    </ligand>
</feature>
<feature type="glycosylation site" description="N-linked (GlcNAc...) asparagine" evidence="2">
    <location>
        <position position="333"/>
    </location>
</feature>
<gene>
    <name type="primary">Mbtps2</name>
</gene>
<comment type="function">
    <text evidence="1">Zinc metalloprotease that mediates intramembrane proteolysis of proteins such as ATF6, ATF6B, SREBF1/SREBP1 and SREBF2/SREBP2. Catalyzes the second step in the proteolytic activation of the sterol regulatory element-binding proteins (SREBPs) SREBF1/SREBP1 and SREBF2/SREBP2: cleaves SREBPs within the first transmembrane segment, thereby releasing the N-terminal segment with a portion of the transmembrane segment attached. Mature N-terminal SREBP fragments shuttle to the nucleus and activate gene transcription. Also mediates the second step in the proteolytic activation of the cyclic AMP-dependent transcription factor ATF-6 (ATF6 and ATF6B). Involved in intramembrane proteolysis during bone formation. In astrocytes and osteoblasts, upon DNA damage and ER stress, mediates the second step of the regulated intramembrane proteolytic activation of the transcription factor CREB3L1, leading to the inhibition of cell-cycle progression.</text>
</comment>
<comment type="catalytic activity">
    <reaction evidence="1">
        <text>Cleaves several transcription factors that are type-2 transmembrane proteins within membrane-spanning domains. Known substrates include sterol regulatory element-binding protein (SREBP) -1, SREBP-2 and forms of the transcriptional activator ATF6. SREBP-2 is cleaved at the site 477-DRSRILL-|-CVLTFLCLSFNPLTSLLQWGGA-505. The residues Asn-Pro, 11 residues distal to the site of cleavage in the membrane-spanning domain, are important for cleavage by S2P endopeptidase. Replacement of either of these residues does not prevent cleavage, but there is no cleavage if both of these residues are replaced.</text>
        <dbReference type="EC" id="3.4.24.85"/>
    </reaction>
</comment>
<comment type="cofactor">
    <cofactor evidence="1">
        <name>Zn(2+)</name>
        <dbReference type="ChEBI" id="CHEBI:29105"/>
    </cofactor>
    <text evidence="1">Binds 1 zinc ion per subunit.</text>
</comment>
<comment type="subcellular location">
    <subcellularLocation>
        <location evidence="1">Membrane</location>
        <topology evidence="2">Multi-pass membrane protein</topology>
    </subcellularLocation>
    <subcellularLocation>
        <location evidence="1">Cytoplasm</location>
    </subcellularLocation>
    <subcellularLocation>
        <location evidence="1">Golgi apparatus membrane</location>
        <topology evidence="2">Multi-pass membrane protein</topology>
    </subcellularLocation>
</comment>
<comment type="similarity">
    <text evidence="4">Belongs to the peptidase M50A family.</text>
</comment>
<proteinExistence type="evidence at transcript level"/>
<organism>
    <name type="scientific">Mus musculus</name>
    <name type="common">Mouse</name>
    <dbReference type="NCBI Taxonomy" id="10090"/>
    <lineage>
        <taxon>Eukaryota</taxon>
        <taxon>Metazoa</taxon>
        <taxon>Chordata</taxon>
        <taxon>Craniata</taxon>
        <taxon>Vertebrata</taxon>
        <taxon>Euteleostomi</taxon>
        <taxon>Mammalia</taxon>
        <taxon>Eutheria</taxon>
        <taxon>Euarchontoglires</taxon>
        <taxon>Glires</taxon>
        <taxon>Rodentia</taxon>
        <taxon>Myomorpha</taxon>
        <taxon>Muroidea</taxon>
        <taxon>Muridae</taxon>
        <taxon>Murinae</taxon>
        <taxon>Mus</taxon>
        <taxon>Mus</taxon>
    </lineage>
</organism>
<protein>
    <recommendedName>
        <fullName>Membrane-bound transcription factor site-2 protease</fullName>
        <ecNumber evidence="1">3.4.24.85</ecNumber>
    </recommendedName>
    <alternativeName>
        <fullName>Endopeptidase S2P</fullName>
    </alternativeName>
</protein>
<dbReference type="EC" id="3.4.24.85" evidence="1"/>
<dbReference type="EMBL" id="AK148325">
    <property type="protein sequence ID" value="BAE28482.1"/>
    <property type="molecule type" value="mRNA"/>
</dbReference>
<dbReference type="EMBL" id="AK164486">
    <property type="protein sequence ID" value="BAE37807.1"/>
    <property type="molecule type" value="mRNA"/>
</dbReference>
<dbReference type="EMBL" id="AL663072">
    <property type="status" value="NOT_ANNOTATED_CDS"/>
    <property type="molecule type" value="Genomic_DNA"/>
</dbReference>
<dbReference type="EMBL" id="BC038343">
    <property type="protein sequence ID" value="AAH38343.1"/>
    <property type="molecule type" value="mRNA"/>
</dbReference>
<dbReference type="CCDS" id="CCDS30498.1"/>
<dbReference type="RefSeq" id="NP_758511.1">
    <property type="nucleotide sequence ID" value="NM_172307.3"/>
</dbReference>
<dbReference type="FunCoup" id="Q8CHX6">
    <property type="interactions" value="3508"/>
</dbReference>
<dbReference type="STRING" id="10090.ENSMUSP00000059471"/>
<dbReference type="MEROPS" id="M50.001"/>
<dbReference type="GlyCosmos" id="Q8CHX6">
    <property type="glycosylation" value="1 site, No reported glycans"/>
</dbReference>
<dbReference type="GlyGen" id="Q8CHX6">
    <property type="glycosylation" value="1 site, 1 N-linked glycan (1 site)"/>
</dbReference>
<dbReference type="iPTMnet" id="Q8CHX6"/>
<dbReference type="PhosphoSitePlus" id="Q8CHX6"/>
<dbReference type="PaxDb" id="10090-ENSMUSP00000059471"/>
<dbReference type="PeptideAtlas" id="Q8CHX6"/>
<dbReference type="ProteomicsDB" id="295810"/>
<dbReference type="Antibodypedia" id="483">
    <property type="antibodies" value="144 antibodies from 29 providers"/>
</dbReference>
<dbReference type="DNASU" id="270669"/>
<dbReference type="Ensembl" id="ENSMUST00000058098.15">
    <property type="protein sequence ID" value="ENSMUSP00000059471.9"/>
    <property type="gene ID" value="ENSMUSG00000046873.19"/>
</dbReference>
<dbReference type="GeneID" id="270669"/>
<dbReference type="KEGG" id="mmu:270669"/>
<dbReference type="UCSC" id="uc009usb.1">
    <property type="organism name" value="mouse"/>
</dbReference>
<dbReference type="AGR" id="MGI:2444506"/>
<dbReference type="CTD" id="51360"/>
<dbReference type="MGI" id="MGI:2444506">
    <property type="gene designation" value="Mbtps2"/>
</dbReference>
<dbReference type="VEuPathDB" id="HostDB:ENSMUSG00000046873"/>
<dbReference type="eggNOG" id="KOG2921">
    <property type="taxonomic scope" value="Eukaryota"/>
</dbReference>
<dbReference type="GeneTree" id="ENSGT00510000048066"/>
<dbReference type="HOGENOM" id="CLU_032523_1_0_1"/>
<dbReference type="InParanoid" id="Q8CHX6"/>
<dbReference type="OMA" id="FYSWGRW"/>
<dbReference type="OrthoDB" id="22186at9989"/>
<dbReference type="PhylomeDB" id="Q8CHX6"/>
<dbReference type="TreeFam" id="TF314478"/>
<dbReference type="Reactome" id="R-MMU-1655829">
    <property type="pathway name" value="Regulation of cholesterol biosynthesis by SREBP (SREBF)"/>
</dbReference>
<dbReference type="Reactome" id="R-MMU-381033">
    <property type="pathway name" value="ATF6 (ATF6-alpha) activates chaperones"/>
</dbReference>
<dbReference type="Reactome" id="R-MMU-8874177">
    <property type="pathway name" value="ATF6B (ATF6-beta) activates chaperones"/>
</dbReference>
<dbReference type="Reactome" id="R-MMU-8874211">
    <property type="pathway name" value="CREB3 factors activate genes"/>
</dbReference>
<dbReference type="BioGRID-ORCS" id="270669">
    <property type="hits" value="9 hits in 30 CRISPR screens"/>
</dbReference>
<dbReference type="ChiTaRS" id="Mbtps2">
    <property type="organism name" value="mouse"/>
</dbReference>
<dbReference type="PRO" id="PR:Q8CHX6"/>
<dbReference type="Proteomes" id="UP000000589">
    <property type="component" value="Chromosome X"/>
</dbReference>
<dbReference type="RNAct" id="Q8CHX6">
    <property type="molecule type" value="protein"/>
</dbReference>
<dbReference type="Bgee" id="ENSMUSG00000046873">
    <property type="expression patterns" value="Expressed in superior cervical ganglion and 225 other cell types or tissues"/>
</dbReference>
<dbReference type="ExpressionAtlas" id="Q8CHX6">
    <property type="expression patterns" value="baseline and differential"/>
</dbReference>
<dbReference type="GO" id="GO:0005737">
    <property type="term" value="C:cytoplasm"/>
    <property type="evidence" value="ECO:0000250"/>
    <property type="project" value="UniProtKB"/>
</dbReference>
<dbReference type="GO" id="GO:0005789">
    <property type="term" value="C:endoplasmic reticulum membrane"/>
    <property type="evidence" value="ECO:0000304"/>
    <property type="project" value="Reactome"/>
</dbReference>
<dbReference type="GO" id="GO:0000139">
    <property type="term" value="C:Golgi membrane"/>
    <property type="evidence" value="ECO:0000304"/>
    <property type="project" value="Reactome"/>
</dbReference>
<dbReference type="GO" id="GO:0046872">
    <property type="term" value="F:metal ion binding"/>
    <property type="evidence" value="ECO:0007669"/>
    <property type="project" value="UniProtKB-KW"/>
</dbReference>
<dbReference type="GO" id="GO:0004222">
    <property type="term" value="F:metalloendopeptidase activity"/>
    <property type="evidence" value="ECO:0000304"/>
    <property type="project" value="Reactome"/>
</dbReference>
<dbReference type="GO" id="GO:0140537">
    <property type="term" value="F:transcription regulator activator activity"/>
    <property type="evidence" value="ECO:0007669"/>
    <property type="project" value="Ensembl"/>
</dbReference>
<dbReference type="GO" id="GO:0070977">
    <property type="term" value="P:bone maturation"/>
    <property type="evidence" value="ECO:0000250"/>
    <property type="project" value="UniProtKB"/>
</dbReference>
<dbReference type="GO" id="GO:0008203">
    <property type="term" value="P:cholesterol metabolic process"/>
    <property type="evidence" value="ECO:0007669"/>
    <property type="project" value="UniProtKB-KW"/>
</dbReference>
<dbReference type="GO" id="GO:0031293">
    <property type="term" value="P:membrane protein intracellular domain proteolysis"/>
    <property type="evidence" value="ECO:0007669"/>
    <property type="project" value="Ensembl"/>
</dbReference>
<dbReference type="GO" id="GO:0007095">
    <property type="term" value="P:mitotic G2 DNA damage checkpoint signaling"/>
    <property type="evidence" value="ECO:0000314"/>
    <property type="project" value="UniProt"/>
</dbReference>
<dbReference type="GO" id="GO:0045542">
    <property type="term" value="P:positive regulation of cholesterol biosynthetic process"/>
    <property type="evidence" value="ECO:0007669"/>
    <property type="project" value="Ensembl"/>
</dbReference>
<dbReference type="GO" id="GO:0045944">
    <property type="term" value="P:positive regulation of transcription by RNA polymerase II"/>
    <property type="evidence" value="ECO:0007669"/>
    <property type="project" value="Ensembl"/>
</dbReference>
<dbReference type="GO" id="GO:0051604">
    <property type="term" value="P:protein maturation"/>
    <property type="evidence" value="ECO:0007669"/>
    <property type="project" value="Ensembl"/>
</dbReference>
<dbReference type="GO" id="GO:0034976">
    <property type="term" value="P:response to endoplasmic reticulum stress"/>
    <property type="evidence" value="ECO:0007669"/>
    <property type="project" value="Ensembl"/>
</dbReference>
<dbReference type="CDD" id="cd06775">
    <property type="entry name" value="cpPDZ_MBTPS2-like"/>
    <property type="match status" value="1"/>
</dbReference>
<dbReference type="CDD" id="cd06162">
    <property type="entry name" value="S2P-M50_PDZ_SREBP"/>
    <property type="match status" value="1"/>
</dbReference>
<dbReference type="Gene3D" id="2.30.42.10">
    <property type="match status" value="1"/>
</dbReference>
<dbReference type="InterPro" id="IPR001193">
    <property type="entry name" value="MBTPS2"/>
</dbReference>
<dbReference type="InterPro" id="IPR036034">
    <property type="entry name" value="PDZ_sf"/>
</dbReference>
<dbReference type="InterPro" id="IPR008915">
    <property type="entry name" value="Peptidase_M50"/>
</dbReference>
<dbReference type="PANTHER" id="PTHR13325:SF3">
    <property type="entry name" value="MEMBRANE-BOUND TRANSCRIPTION FACTOR SITE-2 PROTEASE"/>
    <property type="match status" value="1"/>
</dbReference>
<dbReference type="PANTHER" id="PTHR13325">
    <property type="entry name" value="PROTEASE M50 MEMBRANE-BOUND TRANSCRIPTION FACTOR SITE 2 PROTEASE"/>
    <property type="match status" value="1"/>
</dbReference>
<dbReference type="Pfam" id="PF02163">
    <property type="entry name" value="Peptidase_M50"/>
    <property type="match status" value="1"/>
</dbReference>
<dbReference type="PRINTS" id="PR01000">
    <property type="entry name" value="SREBPS2PTASE"/>
</dbReference>
<dbReference type="SUPFAM" id="SSF50156">
    <property type="entry name" value="PDZ domain-like"/>
    <property type="match status" value="1"/>
</dbReference>
<dbReference type="PROSITE" id="PS00142">
    <property type="entry name" value="ZINC_PROTEASE"/>
    <property type="match status" value="1"/>
</dbReference>